<sequence>MIGKEVTVQDIVLELSEVQPEVLPVDLFCEEELPNEDTEEELDTERIVFKVIAPCGCSHCEVKLRVFVQATEFGIRAFQQLLTGDLQLLCPECRGNCEHGGS</sequence>
<organism>
    <name type="scientific">Human papillomavirus 36</name>
    <dbReference type="NCBI Taxonomy" id="37957"/>
    <lineage>
        <taxon>Viruses</taxon>
        <taxon>Monodnaviria</taxon>
        <taxon>Shotokuvirae</taxon>
        <taxon>Cossaviricota</taxon>
        <taxon>Papovaviricetes</taxon>
        <taxon>Zurhausenvirales</taxon>
        <taxon>Papillomaviridae</taxon>
        <taxon>Firstpapillomavirinae</taxon>
        <taxon>Betapapillomavirus</taxon>
        <taxon>Betapapillomavirus 1</taxon>
    </lineage>
</organism>
<protein>
    <recommendedName>
        <fullName evidence="1">Protein E7</fullName>
    </recommendedName>
</protein>
<organismHost>
    <name type="scientific">Homo sapiens</name>
    <name type="common">Human</name>
    <dbReference type="NCBI Taxonomy" id="9606"/>
</organismHost>
<dbReference type="EMBL" id="U31785">
    <property type="protein sequence ID" value="AAA79437.1"/>
    <property type="molecule type" value="Genomic_DNA"/>
</dbReference>
<dbReference type="SMR" id="P50811"/>
<dbReference type="Proteomes" id="UP000009167">
    <property type="component" value="Genome"/>
</dbReference>
<dbReference type="GO" id="GO:0030430">
    <property type="term" value="C:host cell cytoplasm"/>
    <property type="evidence" value="ECO:0007669"/>
    <property type="project" value="UniProtKB-SubCell"/>
</dbReference>
<dbReference type="GO" id="GO:0042025">
    <property type="term" value="C:host cell nucleus"/>
    <property type="evidence" value="ECO:0007669"/>
    <property type="project" value="UniProtKB-SubCell"/>
</dbReference>
<dbReference type="GO" id="GO:0003677">
    <property type="term" value="F:DNA binding"/>
    <property type="evidence" value="ECO:0007669"/>
    <property type="project" value="UniProtKB-UniRule"/>
</dbReference>
<dbReference type="GO" id="GO:0003700">
    <property type="term" value="F:DNA-binding transcription factor activity"/>
    <property type="evidence" value="ECO:0007669"/>
    <property type="project" value="UniProtKB-UniRule"/>
</dbReference>
<dbReference type="GO" id="GO:0019904">
    <property type="term" value="F:protein domain specific binding"/>
    <property type="evidence" value="ECO:0007669"/>
    <property type="project" value="UniProtKB-UniRule"/>
</dbReference>
<dbReference type="GO" id="GO:0008270">
    <property type="term" value="F:zinc ion binding"/>
    <property type="evidence" value="ECO:0007669"/>
    <property type="project" value="UniProtKB-KW"/>
</dbReference>
<dbReference type="GO" id="GO:0006351">
    <property type="term" value="P:DNA-templated transcription"/>
    <property type="evidence" value="ECO:0007669"/>
    <property type="project" value="UniProtKB-UniRule"/>
</dbReference>
<dbReference type="GO" id="GO:0039645">
    <property type="term" value="P:symbiont-mediated perturbation of host cell cycle G1/S transition checkpoint"/>
    <property type="evidence" value="ECO:0007669"/>
    <property type="project" value="UniProtKB-UniRule"/>
</dbReference>
<dbReference type="GO" id="GO:0052170">
    <property type="term" value="P:symbiont-mediated suppression of host innate immune response"/>
    <property type="evidence" value="ECO:0007669"/>
    <property type="project" value="UniProtKB-KW"/>
</dbReference>
<dbReference type="GO" id="GO:0039502">
    <property type="term" value="P:symbiont-mediated suppression of host type I interferon-mediated signaling pathway"/>
    <property type="evidence" value="ECO:0007669"/>
    <property type="project" value="UniProtKB-UniRule"/>
</dbReference>
<dbReference type="Gene3D" id="3.30.160.330">
    <property type="match status" value="1"/>
</dbReference>
<dbReference type="HAMAP" id="MF_04004">
    <property type="entry name" value="PPV_E7"/>
    <property type="match status" value="1"/>
</dbReference>
<dbReference type="InterPro" id="IPR000148">
    <property type="entry name" value="Papilloma_E7"/>
</dbReference>
<dbReference type="Pfam" id="PF00527">
    <property type="entry name" value="E7"/>
    <property type="match status" value="1"/>
</dbReference>
<dbReference type="PIRSF" id="PIRSF003407">
    <property type="entry name" value="Papvi_E7"/>
    <property type="match status" value="1"/>
</dbReference>
<dbReference type="SUPFAM" id="SSF161234">
    <property type="entry name" value="E7 C-terminal domain-like"/>
    <property type="match status" value="1"/>
</dbReference>
<name>VE7_HPV36</name>
<feature type="chain" id="PRO_0000133434" description="Protein E7">
    <location>
        <begin position="1"/>
        <end position="102"/>
    </location>
</feature>
<feature type="zinc finger region" evidence="1">
    <location>
        <begin position="55"/>
        <end position="93"/>
    </location>
</feature>
<feature type="region of interest" description="E7 terminal domain" evidence="1">
    <location>
        <begin position="1"/>
        <end position="44"/>
    </location>
</feature>
<feature type="short sequence motif" description="LXCXE motif; interaction with host RB1 and TMEM173/STING" evidence="1">
    <location>
        <begin position="27"/>
        <end position="31"/>
    </location>
</feature>
<feature type="short sequence motif" description="Nuclear export signal" evidence="1">
    <location>
        <begin position="75"/>
        <end position="83"/>
    </location>
</feature>
<proteinExistence type="inferred from homology"/>
<reference key="1">
    <citation type="submission" date="1995-10" db="EMBL/GenBank/DDBJ databases">
        <authorList>
            <person name="Delius H."/>
        </authorList>
    </citation>
    <scope>NUCLEOTIDE SEQUENCE [GENOMIC DNA]</scope>
</reference>
<reference key="2">
    <citation type="journal article" date="2002" name="Rev. Med. Virol.">
        <title>Interactions of SV40 large T antigen and other viral proteins with retinoblastoma tumour suppressor.</title>
        <authorList>
            <person name="Lee C."/>
            <person name="Cho Y."/>
        </authorList>
    </citation>
    <scope>REVIEW</scope>
</reference>
<keyword id="KW-0010">Activator</keyword>
<keyword id="KW-0238">DNA-binding</keyword>
<keyword id="KW-0244">Early protein</keyword>
<keyword id="KW-1078">G1/S host cell cycle checkpoint dysregulation by virus</keyword>
<keyword id="KW-1035">Host cytoplasm</keyword>
<keyword id="KW-1048">Host nucleus</keyword>
<keyword id="KW-0945">Host-virus interaction</keyword>
<keyword id="KW-1090">Inhibition of host innate immune response by virus</keyword>
<keyword id="KW-1114">Inhibition of host interferon signaling pathway by virus</keyword>
<keyword id="KW-0922">Interferon antiviral system evasion</keyword>
<keyword id="KW-0479">Metal-binding</keyword>
<keyword id="KW-1121">Modulation of host cell cycle by virus</keyword>
<keyword id="KW-0553">Oncogene</keyword>
<keyword id="KW-0804">Transcription</keyword>
<keyword id="KW-0805">Transcription regulation</keyword>
<keyword id="KW-0899">Viral immunoevasion</keyword>
<keyword id="KW-0862">Zinc</keyword>
<keyword id="KW-0863">Zinc-finger</keyword>
<evidence type="ECO:0000255" key="1">
    <source>
        <dbReference type="HAMAP-Rule" id="MF_04004"/>
    </source>
</evidence>
<comment type="function">
    <text evidence="1">Plays a role in viral genome replication by driving entry of quiescent cells into the cell cycle. Stimulation of progression from G1 to S phase allows the virus to efficiently use the cellular DNA replicating machinery to achieve viral genome replication. E7 protein has both transforming and trans-activating activities. Induces the disassembly of the E2F1 transcription factor from RB1, with subsequent transcriptional activation of E2F1-regulated S-phase genes. Interferes with host histone deacetylation mediated by HDAC1 and HDAC2, leading to transcription activation. Also plays a role in the inhibition of both antiviral and antiproliferative functions of host interferon alpha. Interaction with host TMEM173/STING impairs the ability of TMEM173/STING to sense cytosolic DNA and promote the production of type I interferon (IFN-alpha and IFN-beta).</text>
</comment>
<comment type="subunit">
    <text evidence="1">Homodimer. Homooligomer. Interacts with host RB1; this interaction induces dissociation of RB1-E2F1 complex thereby disrupting RB1 activity. Interacts with host EP300; this interaction represses EP300 transcriptional activity. Interacts with protein E2; this interaction inhibits E7 oncogenic activity. Interacts with host TMEM173/STING; this interaction impairs the ability of TMEM173/STING to sense cytosolic DNA and promote the production of type I interferon (IFN-alpha and IFN-beta).</text>
</comment>
<comment type="subcellular location">
    <subcellularLocation>
        <location evidence="1">Host cytoplasm</location>
    </subcellularLocation>
    <subcellularLocation>
        <location evidence="1">Host nucleus</location>
    </subcellularLocation>
    <text evidence="1">Predominantly found in the host nucleus.</text>
</comment>
<comment type="domain">
    <text evidence="1">The E7 terminal domain is an intrinsically disordered domain, whose flexibility and conformational transitions confer target adaptability to the oncoprotein. It allows adaptation to a variety of protein targets and exposes the PEST degradation sequence that regulates its turnover in the cell.</text>
</comment>
<comment type="PTM">
    <text evidence="1">Highly phosphorylated.</text>
</comment>
<comment type="similarity">
    <text evidence="1">Belongs to the papillomaviridae E7 protein family.</text>
</comment>
<accession>P50811</accession>
<gene>
    <name evidence="1" type="primary">E7</name>
</gene>